<proteinExistence type="inferred from homology"/>
<evidence type="ECO:0000255" key="1"/>
<evidence type="ECO:0000255" key="2">
    <source>
        <dbReference type="PROSITE-ProRule" id="PRU00066"/>
    </source>
</evidence>
<evidence type="ECO:0000256" key="3">
    <source>
        <dbReference type="SAM" id="MobiDB-lite"/>
    </source>
</evidence>
<evidence type="ECO:0000305" key="4"/>
<dbReference type="EMBL" id="AAFI02000027">
    <property type="protein sequence ID" value="EAL67888.1"/>
    <property type="molecule type" value="Genomic_DNA"/>
</dbReference>
<dbReference type="RefSeq" id="XP_641865.1">
    <property type="nucleotide sequence ID" value="XM_636773.1"/>
</dbReference>
<dbReference type="SMR" id="Q54XA2"/>
<dbReference type="FunCoup" id="Q54XA2">
    <property type="interactions" value="35"/>
</dbReference>
<dbReference type="STRING" id="44689.Q54XA2"/>
<dbReference type="GlyGen" id="Q54XA2">
    <property type="glycosylation" value="2 sites"/>
</dbReference>
<dbReference type="PaxDb" id="44689-DDB0305021"/>
<dbReference type="EnsemblProtists" id="EAL67888">
    <property type="protein sequence ID" value="EAL67888"/>
    <property type="gene ID" value="DDB_G0279099"/>
</dbReference>
<dbReference type="GeneID" id="8621871"/>
<dbReference type="KEGG" id="ddi:DDB_G0279099"/>
<dbReference type="dictyBase" id="DDB_G0279099"/>
<dbReference type="VEuPathDB" id="AmoebaDB:DDB_G0279099"/>
<dbReference type="eggNOG" id="KOG3572">
    <property type="taxonomic scope" value="Eukaryota"/>
</dbReference>
<dbReference type="HOGENOM" id="CLU_230757_0_0_1"/>
<dbReference type="InParanoid" id="Q54XA2"/>
<dbReference type="OMA" id="PYWLAIS"/>
<dbReference type="Reactome" id="R-DDI-9639288">
    <property type="pathway name" value="Amino acids regulate mTORC1"/>
</dbReference>
<dbReference type="PRO" id="PR:Q54XA2"/>
<dbReference type="Proteomes" id="UP000002195">
    <property type="component" value="Chromosome 3"/>
</dbReference>
<dbReference type="GO" id="GO:1990130">
    <property type="term" value="C:GATOR1 complex"/>
    <property type="evidence" value="ECO:0000318"/>
    <property type="project" value="GO_Central"/>
</dbReference>
<dbReference type="GO" id="GO:0005096">
    <property type="term" value="F:GTPase activator activity"/>
    <property type="evidence" value="ECO:0007669"/>
    <property type="project" value="InterPro"/>
</dbReference>
<dbReference type="GO" id="GO:0035556">
    <property type="term" value="P:intracellular signal transduction"/>
    <property type="evidence" value="ECO:0007669"/>
    <property type="project" value="InterPro"/>
</dbReference>
<dbReference type="GO" id="GO:1904262">
    <property type="term" value="P:negative regulation of TORC1 signaling"/>
    <property type="evidence" value="ECO:0000318"/>
    <property type="project" value="GO_Central"/>
</dbReference>
<dbReference type="GO" id="GO:0010508">
    <property type="term" value="P:positive regulation of autophagy"/>
    <property type="evidence" value="ECO:0000318"/>
    <property type="project" value="GO_Central"/>
</dbReference>
<dbReference type="CDD" id="cd04371">
    <property type="entry name" value="DEP"/>
    <property type="match status" value="1"/>
</dbReference>
<dbReference type="Gene3D" id="1.10.10.10">
    <property type="entry name" value="Winged helix-like DNA-binding domain superfamily/Winged helix DNA-binding domain"/>
    <property type="match status" value="1"/>
</dbReference>
<dbReference type="InterPro" id="IPR000591">
    <property type="entry name" value="DEP_dom"/>
</dbReference>
<dbReference type="InterPro" id="IPR045838">
    <property type="entry name" value="DEPDC5_CTD"/>
</dbReference>
<dbReference type="InterPro" id="IPR027244">
    <property type="entry name" value="IML1"/>
</dbReference>
<dbReference type="InterPro" id="IPR055213">
    <property type="entry name" value="IML1_double_psi_beta_barrel"/>
</dbReference>
<dbReference type="InterPro" id="IPR048255">
    <property type="entry name" value="IML1_N"/>
</dbReference>
<dbReference type="InterPro" id="IPR036388">
    <property type="entry name" value="WH-like_DNA-bd_sf"/>
</dbReference>
<dbReference type="InterPro" id="IPR036390">
    <property type="entry name" value="WH_DNA-bd_sf"/>
</dbReference>
<dbReference type="PANTHER" id="PTHR13179">
    <property type="entry name" value="DEP DOMAIN CONTAINING PROTEIN 5"/>
    <property type="match status" value="1"/>
</dbReference>
<dbReference type="PANTHER" id="PTHR13179:SF8">
    <property type="entry name" value="GATOR COMPLEX PROTEIN DEPDC5"/>
    <property type="match status" value="1"/>
</dbReference>
<dbReference type="Pfam" id="PF00610">
    <property type="entry name" value="DEP"/>
    <property type="match status" value="1"/>
</dbReference>
<dbReference type="Pfam" id="PF19418">
    <property type="entry name" value="DEPDC5_CTD"/>
    <property type="match status" value="1"/>
</dbReference>
<dbReference type="Pfam" id="PF12257">
    <property type="entry name" value="IML1"/>
    <property type="match status" value="1"/>
</dbReference>
<dbReference type="Pfam" id="PF23013">
    <property type="entry name" value="IML1_N"/>
    <property type="match status" value="1"/>
</dbReference>
<dbReference type="SMART" id="SM00049">
    <property type="entry name" value="DEP"/>
    <property type="match status" value="1"/>
</dbReference>
<dbReference type="SUPFAM" id="SSF46785">
    <property type="entry name" value="Winged helix' DNA-binding domain"/>
    <property type="match status" value="1"/>
</dbReference>
<dbReference type="PROSITE" id="PS50186">
    <property type="entry name" value="DEP"/>
    <property type="match status" value="1"/>
</dbReference>
<name>Y9099_DICDI</name>
<organism>
    <name type="scientific">Dictyostelium discoideum</name>
    <name type="common">Social amoeba</name>
    <dbReference type="NCBI Taxonomy" id="44689"/>
    <lineage>
        <taxon>Eukaryota</taxon>
        <taxon>Amoebozoa</taxon>
        <taxon>Evosea</taxon>
        <taxon>Eumycetozoa</taxon>
        <taxon>Dictyostelia</taxon>
        <taxon>Dictyosteliales</taxon>
        <taxon>Dictyosteliaceae</taxon>
        <taxon>Dictyostelium</taxon>
    </lineage>
</organism>
<comment type="similarity">
    <text evidence="4">In the N-terminal section; belongs to the IML1 family.</text>
</comment>
<accession>Q54XA2</accession>
<feature type="chain" id="PRO_0000388258" description="DEP domain-containing protein DDB_G0279099">
    <location>
        <begin position="1"/>
        <end position="2242"/>
    </location>
</feature>
<feature type="domain" description="DEP" evidence="2">
    <location>
        <begin position="1556"/>
        <end position="1629"/>
    </location>
</feature>
<feature type="region of interest" description="Disordered" evidence="3">
    <location>
        <begin position="388"/>
        <end position="465"/>
    </location>
</feature>
<feature type="region of interest" description="Disordered" evidence="3">
    <location>
        <begin position="576"/>
        <end position="644"/>
    </location>
</feature>
<feature type="region of interest" description="Disordered" evidence="3">
    <location>
        <begin position="701"/>
        <end position="730"/>
    </location>
</feature>
<feature type="region of interest" description="Disordered" evidence="3">
    <location>
        <begin position="871"/>
        <end position="965"/>
    </location>
</feature>
<feature type="region of interest" description="Disordered" evidence="3">
    <location>
        <begin position="1077"/>
        <end position="1194"/>
    </location>
</feature>
<feature type="region of interest" description="Disordered" evidence="3">
    <location>
        <begin position="1287"/>
        <end position="1336"/>
    </location>
</feature>
<feature type="region of interest" description="Disordered" evidence="3">
    <location>
        <begin position="1384"/>
        <end position="1414"/>
    </location>
</feature>
<feature type="region of interest" description="Disordered" evidence="3">
    <location>
        <begin position="1446"/>
        <end position="1471"/>
    </location>
</feature>
<feature type="region of interest" description="Disordered" evidence="3">
    <location>
        <begin position="1502"/>
        <end position="1521"/>
    </location>
</feature>
<feature type="region of interest" description="Disordered" evidence="3">
    <location>
        <begin position="1645"/>
        <end position="1763"/>
    </location>
</feature>
<feature type="region of interest" description="Disordered" evidence="3">
    <location>
        <begin position="1803"/>
        <end position="1910"/>
    </location>
</feature>
<feature type="region of interest" description="Disordered" evidence="3">
    <location>
        <begin position="2122"/>
        <end position="2145"/>
    </location>
</feature>
<feature type="region of interest" description="Disordered" evidence="3">
    <location>
        <begin position="2165"/>
        <end position="2218"/>
    </location>
</feature>
<feature type="coiled-coil region" evidence="1">
    <location>
        <begin position="392"/>
        <end position="440"/>
    </location>
</feature>
<feature type="coiled-coil region" evidence="1">
    <location>
        <begin position="1066"/>
        <end position="1101"/>
    </location>
</feature>
<feature type="coiled-coil region" evidence="1">
    <location>
        <begin position="1791"/>
        <end position="1821"/>
    </location>
</feature>
<feature type="compositionally biased region" description="Low complexity" evidence="3">
    <location>
        <begin position="581"/>
        <end position="614"/>
    </location>
</feature>
<feature type="compositionally biased region" description="Acidic residues" evidence="3">
    <location>
        <begin position="622"/>
        <end position="631"/>
    </location>
</feature>
<feature type="compositionally biased region" description="Polar residues" evidence="3">
    <location>
        <begin position="632"/>
        <end position="642"/>
    </location>
</feature>
<feature type="compositionally biased region" description="Polar residues" evidence="3">
    <location>
        <begin position="719"/>
        <end position="729"/>
    </location>
</feature>
<feature type="compositionally biased region" description="Low complexity" evidence="3">
    <location>
        <begin position="872"/>
        <end position="955"/>
    </location>
</feature>
<feature type="compositionally biased region" description="Basic and acidic residues" evidence="3">
    <location>
        <begin position="1082"/>
        <end position="1106"/>
    </location>
</feature>
<feature type="compositionally biased region" description="Low complexity" evidence="3">
    <location>
        <begin position="1108"/>
        <end position="1182"/>
    </location>
</feature>
<feature type="compositionally biased region" description="Low complexity" evidence="3">
    <location>
        <begin position="1287"/>
        <end position="1299"/>
    </location>
</feature>
<feature type="compositionally biased region" description="Polar residues" evidence="3">
    <location>
        <begin position="1300"/>
        <end position="1311"/>
    </location>
</feature>
<feature type="compositionally biased region" description="Low complexity" evidence="3">
    <location>
        <begin position="1312"/>
        <end position="1336"/>
    </location>
</feature>
<feature type="compositionally biased region" description="Low complexity" evidence="3">
    <location>
        <begin position="1384"/>
        <end position="1410"/>
    </location>
</feature>
<feature type="compositionally biased region" description="Low complexity" evidence="3">
    <location>
        <begin position="1446"/>
        <end position="1470"/>
    </location>
</feature>
<feature type="compositionally biased region" description="Low complexity" evidence="3">
    <location>
        <begin position="1645"/>
        <end position="1668"/>
    </location>
</feature>
<feature type="compositionally biased region" description="Polar residues" evidence="3">
    <location>
        <begin position="1669"/>
        <end position="1702"/>
    </location>
</feature>
<feature type="compositionally biased region" description="Low complexity" evidence="3">
    <location>
        <begin position="1703"/>
        <end position="1760"/>
    </location>
</feature>
<feature type="compositionally biased region" description="Low complexity" evidence="3">
    <location>
        <begin position="1807"/>
        <end position="1848"/>
    </location>
</feature>
<feature type="compositionally biased region" description="Polar residues" evidence="3">
    <location>
        <begin position="1849"/>
        <end position="1871"/>
    </location>
</feature>
<feature type="compositionally biased region" description="Polar residues" evidence="3">
    <location>
        <begin position="1879"/>
        <end position="1889"/>
    </location>
</feature>
<feature type="compositionally biased region" description="Low complexity" evidence="3">
    <location>
        <begin position="1890"/>
        <end position="1910"/>
    </location>
</feature>
<feature type="compositionally biased region" description="Low complexity" evidence="3">
    <location>
        <begin position="2122"/>
        <end position="2133"/>
    </location>
</feature>
<feature type="compositionally biased region" description="Basic and acidic residues" evidence="3">
    <location>
        <begin position="2166"/>
        <end position="2181"/>
    </location>
</feature>
<feature type="compositionally biased region" description="Basic and acidic residues" evidence="3">
    <location>
        <begin position="2192"/>
        <end position="2218"/>
    </location>
</feature>
<reference key="1">
    <citation type="journal article" date="2005" name="Nature">
        <title>The genome of the social amoeba Dictyostelium discoideum.</title>
        <authorList>
            <person name="Eichinger L."/>
            <person name="Pachebat J.A."/>
            <person name="Gloeckner G."/>
            <person name="Rajandream M.A."/>
            <person name="Sucgang R."/>
            <person name="Berriman M."/>
            <person name="Song J."/>
            <person name="Olsen R."/>
            <person name="Szafranski K."/>
            <person name="Xu Q."/>
            <person name="Tunggal B."/>
            <person name="Kummerfeld S."/>
            <person name="Madera M."/>
            <person name="Konfortov B.A."/>
            <person name="Rivero F."/>
            <person name="Bankier A.T."/>
            <person name="Lehmann R."/>
            <person name="Hamlin N."/>
            <person name="Davies R."/>
            <person name="Gaudet P."/>
            <person name="Fey P."/>
            <person name="Pilcher K."/>
            <person name="Chen G."/>
            <person name="Saunders D."/>
            <person name="Sodergren E.J."/>
            <person name="Davis P."/>
            <person name="Kerhornou A."/>
            <person name="Nie X."/>
            <person name="Hall N."/>
            <person name="Anjard C."/>
            <person name="Hemphill L."/>
            <person name="Bason N."/>
            <person name="Farbrother P."/>
            <person name="Desany B."/>
            <person name="Just E."/>
            <person name="Morio T."/>
            <person name="Rost R."/>
            <person name="Churcher C.M."/>
            <person name="Cooper J."/>
            <person name="Haydock S."/>
            <person name="van Driessche N."/>
            <person name="Cronin A."/>
            <person name="Goodhead I."/>
            <person name="Muzny D.M."/>
            <person name="Mourier T."/>
            <person name="Pain A."/>
            <person name="Lu M."/>
            <person name="Harper D."/>
            <person name="Lindsay R."/>
            <person name="Hauser H."/>
            <person name="James K.D."/>
            <person name="Quiles M."/>
            <person name="Madan Babu M."/>
            <person name="Saito T."/>
            <person name="Buchrieser C."/>
            <person name="Wardroper A."/>
            <person name="Felder M."/>
            <person name="Thangavelu M."/>
            <person name="Johnson D."/>
            <person name="Knights A."/>
            <person name="Loulseged H."/>
            <person name="Mungall K.L."/>
            <person name="Oliver K."/>
            <person name="Price C."/>
            <person name="Quail M.A."/>
            <person name="Urushihara H."/>
            <person name="Hernandez J."/>
            <person name="Rabbinowitsch E."/>
            <person name="Steffen D."/>
            <person name="Sanders M."/>
            <person name="Ma J."/>
            <person name="Kohara Y."/>
            <person name="Sharp S."/>
            <person name="Simmonds M.N."/>
            <person name="Spiegler S."/>
            <person name="Tivey A."/>
            <person name="Sugano S."/>
            <person name="White B."/>
            <person name="Walker D."/>
            <person name="Woodward J.R."/>
            <person name="Winckler T."/>
            <person name="Tanaka Y."/>
            <person name="Shaulsky G."/>
            <person name="Schleicher M."/>
            <person name="Weinstock G.M."/>
            <person name="Rosenthal A."/>
            <person name="Cox E.C."/>
            <person name="Chisholm R.L."/>
            <person name="Gibbs R.A."/>
            <person name="Loomis W.F."/>
            <person name="Platzer M."/>
            <person name="Kay R.R."/>
            <person name="Williams J.G."/>
            <person name="Dear P.H."/>
            <person name="Noegel A.A."/>
            <person name="Barrell B.G."/>
            <person name="Kuspa A."/>
        </authorList>
    </citation>
    <scope>NUCLEOTIDE SEQUENCE [LARGE SCALE GENOMIC DNA]</scope>
    <source>
        <strain>AX4</strain>
    </source>
</reference>
<keyword id="KW-0175">Coiled coil</keyword>
<keyword id="KW-1185">Reference proteome</keyword>
<gene>
    <name type="ORF">DDB_G0279099</name>
</gene>
<protein>
    <recommendedName>
        <fullName>DEP domain-containing protein DDB_G0279099</fullName>
    </recommendedName>
</protein>
<sequence>MNNNNKKGVYILWVHDQQFSKEELVVNPEYFPKLKIMDVLKIYSPSNPSKRLCLRVKQLSPLKTKLQISISKYVAGVFDFALRKEVVVNIIPEKQAIIDFVELSFKDQYIGRSDMWRLKLNLQNECVYVLKKLAFAQIRAQVEEMVSNGQKVSSGLIDDSTKFVFRSRSAKFVLFIQMSKEMWDYSPDGELYFEKAVNGFLKNLFQRWKSLSVNHTITIILFSRTFHENDDILDEIPNIPRNPQGKLYQDFYKVVVNEETRPDWSSIIVNLKREFNDYHTSVNWDIYGRNSALGKNSTASQGNFLEAINLGMSYFDKHYIDRDFTRTGQMIVVISAGTGIFEVDPDINLITKQRMIDNGIGCDLICLNNHPLHVVPLFKFTISNQNKSQNTIQNNNNNNNNNNNNNNNNNNNNNNNNNNNNNNNNNNNNNSNNNKNNQNNGKAISNIGRNNNNSNSGSSGNSNNSSGGQLYNFPYWLAISFYDENNTTTTTTDVTTNDKRNGLFVPQFKIPEKVNSFYYEDDEKPVYDFYIPKDPRNLPAFATPKINHKYTSNSLGVNSYEDTIFNMPNGGGILDDSNALGGNNNNNYNNNNGNGNGHNHNNHNNNNNNNNNNDHGGHSDTEPSDFSDTEDNSSTTPNSQYSRVAIGLNDKKRATFQIGGTRSSSSFENQRTIINSTTSNNNNNNSNNVVNKRYTSTQHQPILRNGGTINNNNNNQQNHPISPSNSFDQKTIPYHNQLLSTIPPQLFGKKKKEINPFTYDSTPFHLTSNRRRWSHLWFSPNTYIFGKTNTNPNPFLPNWKSLCEPASLPITTDYFPSTKDLKAKYREYVHNLTLPDDNEYTNSFEALLKELISQRLAQGYQLIMITNSEIDPTTTTTTGGTTTPATTTPATTTPATTATSTTPTTIITPTTNPSTATSAIATPSMATPSSSTTTTTTTANLSTSPPNSSNTVPNSGGSGKGTKKSYQLSLGHDFHSITYDPSNLSIQVKRYQRYNGRNSSGSKKLRYHYFLNTIHLQGFLHNSIELQHTASSEYPWNSLDNLICGQLAMSGFGPRIKYWRVLYAIIPTVENNQHQQQLQLEQQEKEKEKARLAALEKKKPFPREDSFSTLILPTNSSSSSSSSSSLPSTVSTTNTNTNNNNNNNNNNNNNNINTTVPTNVPTTTTTDDSTVKNTSTTTATTATEDHGLNTAFNSSSIPIPSKLASPLQSPNLSPKASSVSTSMAALSSSTLVSSNANTTTTNNPVLTTTTTTTTTTAVLNSNGTPLVNSNSSSNSNFAQNSISMLNGSQQQQQLIGSQSAPTSPLTPHKNINTNNNNNNNTTTNTTNNNNSVMNGSAGIINSSSGLNGIKSPPLPILPSSNSLLSSNVSPSNNITPLNSITNSSELLPSSSGASSSSSNTLSSSNSGENNALPEHTEEERLIAFNKFKEFINSQINRNQLAANSNAQSSLLNSSTNNANSNNSSNSTNTSGTVIQQKLDIKTILFSSIETFDPSTIVSNEKSNNNTYTNNNNNNNSINSLNYNSVPSQEQIDLFKEKLYSSNLSGIFYRLNMPYPIGIKMTERKYGIRRTSYKKCFIGAECIDWMLQNIEITKREEALIICQKMMDQKLIKQVEKSTFVDGQFYYRLKEDDLFISSPIIKTINNTNNNFNNNNTNSNNNQQQQQQQQSIPSVTSSAVNSPNKDSNTPDHSPISSPKQIGNKLSSSSNNTPSTFLNSSTNNTNQSTNTTSSSSSTTNINTTLNTNNTLSSSTPPITSIQSSMSNSTKSVVPISSLSSLINNPSLRQSNTDYLTNKEKDKEKEIDEANGDNNNNNNNNNNNNNNNNNNNNNNNNNNNSSNNGENDSSSNSGQGSLNSTLSSIPPATTPNTNPLHFSGGISYGSSVQNSNQHQQQQPQQPQQQQQQQQQQQQQPNNLIDYYENPNKISEAKIEMDLSKTDRFEWILMKYDKTFCPTRYFHVEFNWIVSTGCVVDDFINSCVRKAKQFGLTLIQIPMEKNYSPFSLPTHVHLDQQLMSPQVLKHIFTKFGLIPDTIRKRASSLVTRQDLYIFNDSDVQYSEYVHRTGLLFVRVVEDGFLCYINNAPSNRPFLPAATMCLESFQNLCNQLNNSLSFIGNGSLNSNNNYNNNNNNNNNNNGGGNGNPNLLKPIDRQEANFLSLLALGYKQNSDTEEKNNESDSDNNHNQDTCDNSDNDTDHLSESHEGSHKNESDKEGRDKNEMWESQSEVVYYSVMSRSPLLGSFNE</sequence>